<sequence>MTSKLVISALGLCVSGALSTTLASTPATTNQQITKRIDYLQAQINELRTQQKKERQKKKAPYRKCSKKSCKYHSSRLSIGPYLHKTPAFDGSDLIINVPTVREDARLLLLQHQLEEECRALGVPLPEMPRVVFSGKLEGQTSYGSTYAGSRNANINFSGAEFDTYVQANPWVSGYMALDYDPDELADGSRVFMNRAFIMIGNLSRFPFYTSIGQVYVPFGRYSSMMITTPVTQALGRTRARAITLGYQQTGNNALHAELYGYQGLTNNFSRSNHNDQWGTDVGYEFSNGDRVSGEIGASFISNLADSQGMQATAFLDNETLRHRVSALGVYGSLAIKPVVFIAEYISALKSFDINDVNFANRGARPTAFHTEANYTFKTGSKPSSIGIGYGHTSQALGVGLPQDRYSVFYNVNIWKDTNFALEYRHDVNYTRNAISTGTNPTPAKVVADLGKSDNVVTAQFDLYF</sequence>
<comment type="similarity">
    <text evidence="2">Belongs to the UPF0422 family.</text>
</comment>
<comment type="sequence caution" evidence="2">
    <conflict type="erroneous initiation">
        <sequence resource="EMBL-CDS" id="AAO90464"/>
    </conflict>
</comment>
<gene>
    <name type="ordered locus">CBU_0937</name>
</gene>
<proteinExistence type="inferred from homology"/>
<evidence type="ECO:0000255" key="1"/>
<evidence type="ECO:0000305" key="2"/>
<accession>Q83D09</accession>
<keyword id="KW-0175">Coiled coil</keyword>
<keyword id="KW-1185">Reference proteome</keyword>
<keyword id="KW-0732">Signal</keyword>
<name>Y937_COXBU</name>
<reference key="1">
    <citation type="journal article" date="2003" name="Proc. Natl. Acad. Sci. U.S.A.">
        <title>Complete genome sequence of the Q-fever pathogen, Coxiella burnetii.</title>
        <authorList>
            <person name="Seshadri R."/>
            <person name="Paulsen I.T."/>
            <person name="Eisen J.A."/>
            <person name="Read T.D."/>
            <person name="Nelson K.E."/>
            <person name="Nelson W.C."/>
            <person name="Ward N.L."/>
            <person name="Tettelin H."/>
            <person name="Davidsen T.M."/>
            <person name="Beanan M.J."/>
            <person name="DeBoy R.T."/>
            <person name="Daugherty S.C."/>
            <person name="Brinkac L.M."/>
            <person name="Madupu R."/>
            <person name="Dodson R.J."/>
            <person name="Khouri H.M."/>
            <person name="Lee K.H."/>
            <person name="Carty H.A."/>
            <person name="Scanlan D."/>
            <person name="Heinzen R.A."/>
            <person name="Thompson H.A."/>
            <person name="Samuel J.E."/>
            <person name="Fraser C.M."/>
            <person name="Heidelberg J.F."/>
        </authorList>
    </citation>
    <scope>NUCLEOTIDE SEQUENCE [LARGE SCALE GENOMIC DNA]</scope>
    <source>
        <strain>RSA 493 / Nine Mile phase I</strain>
    </source>
</reference>
<protein>
    <recommendedName>
        <fullName>UPF0422 protein CBU_0937</fullName>
    </recommendedName>
</protein>
<dbReference type="EMBL" id="AE016828">
    <property type="protein sequence ID" value="AAO90464.2"/>
    <property type="status" value="ALT_INIT"/>
    <property type="molecule type" value="Genomic_DNA"/>
</dbReference>
<dbReference type="RefSeq" id="NP_819950.2">
    <property type="nucleotide sequence ID" value="NC_002971.3"/>
</dbReference>
<dbReference type="IntAct" id="Q83D09">
    <property type="interactions" value="26"/>
</dbReference>
<dbReference type="MINT" id="Q83D09"/>
<dbReference type="STRING" id="227377.CBU_0937"/>
<dbReference type="EnsemblBacteria" id="AAO90464">
    <property type="protein sequence ID" value="AAO90464"/>
    <property type="gene ID" value="CBU_0937"/>
</dbReference>
<dbReference type="GeneID" id="1208830"/>
<dbReference type="KEGG" id="cbu:CBU_0937"/>
<dbReference type="PATRIC" id="fig|227377.7.peg.927"/>
<dbReference type="eggNOG" id="COG3203">
    <property type="taxonomic scope" value="Bacteria"/>
</dbReference>
<dbReference type="HOGENOM" id="CLU_035501_0_0_6"/>
<dbReference type="OrthoDB" id="5417572at2"/>
<dbReference type="Proteomes" id="UP000002671">
    <property type="component" value="Chromosome"/>
</dbReference>
<dbReference type="NCBIfam" id="NF033652">
    <property type="entry name" value="LbtU_sider_porin"/>
    <property type="match status" value="1"/>
</dbReference>
<feature type="signal peptide" evidence="1">
    <location>
        <begin position="1"/>
        <end position="23"/>
    </location>
</feature>
<feature type="chain" id="PRO_0000283754" description="UPF0422 protein CBU_0937">
    <location>
        <begin position="24"/>
        <end position="465"/>
    </location>
</feature>
<feature type="coiled-coil region" evidence="1">
    <location>
        <begin position="28"/>
        <end position="60"/>
    </location>
</feature>
<organism>
    <name type="scientific">Coxiella burnetii (strain RSA 493 / Nine Mile phase I)</name>
    <dbReference type="NCBI Taxonomy" id="227377"/>
    <lineage>
        <taxon>Bacteria</taxon>
        <taxon>Pseudomonadati</taxon>
        <taxon>Pseudomonadota</taxon>
        <taxon>Gammaproteobacteria</taxon>
        <taxon>Legionellales</taxon>
        <taxon>Coxiellaceae</taxon>
        <taxon>Coxiella</taxon>
    </lineage>
</organism>